<organism>
    <name type="scientific">Xylella fastidiosa (strain 9a5c)</name>
    <dbReference type="NCBI Taxonomy" id="160492"/>
    <lineage>
        <taxon>Bacteria</taxon>
        <taxon>Pseudomonadati</taxon>
        <taxon>Pseudomonadota</taxon>
        <taxon>Gammaproteobacteria</taxon>
        <taxon>Lysobacterales</taxon>
        <taxon>Lysobacteraceae</taxon>
        <taxon>Xylella</taxon>
    </lineage>
</organism>
<proteinExistence type="inferred from homology"/>
<comment type="function">
    <text evidence="1">H(+)-stimulated, divalent metal cation uptake system.</text>
</comment>
<comment type="subcellular location">
    <subcellularLocation>
        <location evidence="1">Cell inner membrane</location>
        <topology evidence="1">Multi-pass membrane protein</topology>
    </subcellularLocation>
</comment>
<comment type="similarity">
    <text evidence="1">Belongs to the NRAMP family.</text>
</comment>
<name>MNTH_XYLFA</name>
<protein>
    <recommendedName>
        <fullName evidence="1">Divalent metal cation transporter MntH</fullName>
    </recommendedName>
</protein>
<feature type="chain" id="PRO_0000212645" description="Divalent metal cation transporter MntH">
    <location>
        <begin position="1"/>
        <end position="472"/>
    </location>
</feature>
<feature type="transmembrane region" description="Helical" evidence="1">
    <location>
        <begin position="59"/>
        <end position="79"/>
    </location>
</feature>
<feature type="transmembrane region" description="Helical" evidence="1">
    <location>
        <begin position="92"/>
        <end position="112"/>
    </location>
</feature>
<feature type="transmembrane region" description="Helical" evidence="1">
    <location>
        <begin position="136"/>
        <end position="156"/>
    </location>
</feature>
<feature type="transmembrane region" description="Helical" evidence="1">
    <location>
        <begin position="167"/>
        <end position="187"/>
    </location>
</feature>
<feature type="transmembrane region" description="Helical" evidence="1">
    <location>
        <begin position="196"/>
        <end position="216"/>
    </location>
</feature>
<feature type="transmembrane region" description="Helical" evidence="1">
    <location>
        <begin position="233"/>
        <end position="253"/>
    </location>
</feature>
<feature type="transmembrane region" description="Helical" evidence="1">
    <location>
        <begin position="288"/>
        <end position="308"/>
    </location>
</feature>
<feature type="transmembrane region" description="Helical" evidence="1">
    <location>
        <begin position="325"/>
        <end position="345"/>
    </location>
</feature>
<feature type="transmembrane region" description="Helical" evidence="1">
    <location>
        <begin position="377"/>
        <end position="397"/>
    </location>
</feature>
<feature type="transmembrane region" description="Helical" evidence="1">
    <location>
        <begin position="402"/>
        <end position="422"/>
    </location>
</feature>
<feature type="transmembrane region" description="Helical" evidence="1">
    <location>
        <begin position="439"/>
        <end position="459"/>
    </location>
</feature>
<gene>
    <name evidence="1" type="primary">mntH</name>
    <name type="ordered locus">XF_1015</name>
</gene>
<keyword id="KW-0997">Cell inner membrane</keyword>
<keyword id="KW-1003">Cell membrane</keyword>
<keyword id="KW-0406">Ion transport</keyword>
<keyword id="KW-0472">Membrane</keyword>
<keyword id="KW-0769">Symport</keyword>
<keyword id="KW-0812">Transmembrane</keyword>
<keyword id="KW-1133">Transmembrane helix</keyword>
<keyword id="KW-0813">Transport</keyword>
<evidence type="ECO:0000255" key="1">
    <source>
        <dbReference type="HAMAP-Rule" id="MF_00221"/>
    </source>
</evidence>
<sequence>MSCGIANAIRWDVSLLIHRSMSSSMSSVQPTSPVSDSPSLGEMHASVAVSRRGHWGFRLLAFLGPGYMVSVGYMDPGNWATGLAGGSRFGYMLLSVILLSNVMAIVLQALAARLGIASDMDLAQACRARYSRGTTLALWVVCELAIIACDLAEVIGTAIALNLLLGVPIIWGVVITAVDVVLVLLLMHRGFRALEAFVIALLLVIFGCFVVQIVLAAPPLQEVLGGFVPRWQVVADPQALYLAIGIVGATVMPHNLYLHSSIVQTRAYPRTPVGRRSALRWAVADSTLALMLALFINASILILAAAVFHAQHHFDVEEIEQAYQLLAPVLGVGVAATLFATALLASGINSTVTATLAGQIVMEGFLRLRLRPWLRRVLTRGLAIVPVIVVVALYGEQGTGRLLLLSQVILSMQLPFAVIPLLRCVADRKVMGALVAPRWLMVVAWLIAGVIVVLNVKLLGDYAVHLMVGVSD</sequence>
<dbReference type="EMBL" id="AE003849">
    <property type="protein sequence ID" value="AAF83825.1"/>
    <property type="molecule type" value="Genomic_DNA"/>
</dbReference>
<dbReference type="PIR" id="C82733">
    <property type="entry name" value="C82733"/>
</dbReference>
<dbReference type="RefSeq" id="WP_010893534.1">
    <property type="nucleotide sequence ID" value="NC_002488.3"/>
</dbReference>
<dbReference type="SMR" id="Q9PEL3"/>
<dbReference type="STRING" id="160492.XF_1015"/>
<dbReference type="KEGG" id="xfa:XF_1015"/>
<dbReference type="eggNOG" id="COG1914">
    <property type="taxonomic scope" value="Bacteria"/>
</dbReference>
<dbReference type="HOGENOM" id="CLU_020088_2_0_6"/>
<dbReference type="Proteomes" id="UP000000812">
    <property type="component" value="Chromosome"/>
</dbReference>
<dbReference type="GO" id="GO:0005886">
    <property type="term" value="C:plasma membrane"/>
    <property type="evidence" value="ECO:0007669"/>
    <property type="project" value="UniProtKB-SubCell"/>
</dbReference>
<dbReference type="GO" id="GO:0015086">
    <property type="term" value="F:cadmium ion transmembrane transporter activity"/>
    <property type="evidence" value="ECO:0007669"/>
    <property type="project" value="TreeGrafter"/>
</dbReference>
<dbReference type="GO" id="GO:0005384">
    <property type="term" value="F:manganese ion transmembrane transporter activity"/>
    <property type="evidence" value="ECO:0007669"/>
    <property type="project" value="TreeGrafter"/>
</dbReference>
<dbReference type="GO" id="GO:0046872">
    <property type="term" value="F:metal ion binding"/>
    <property type="evidence" value="ECO:0007669"/>
    <property type="project" value="UniProtKB-UniRule"/>
</dbReference>
<dbReference type="GO" id="GO:0015293">
    <property type="term" value="F:symporter activity"/>
    <property type="evidence" value="ECO:0007669"/>
    <property type="project" value="UniProtKB-UniRule"/>
</dbReference>
<dbReference type="GO" id="GO:0034755">
    <property type="term" value="P:iron ion transmembrane transport"/>
    <property type="evidence" value="ECO:0007669"/>
    <property type="project" value="TreeGrafter"/>
</dbReference>
<dbReference type="HAMAP" id="MF_00221">
    <property type="entry name" value="NRAMP"/>
    <property type="match status" value="1"/>
</dbReference>
<dbReference type="InterPro" id="IPR001046">
    <property type="entry name" value="NRAMP_fam"/>
</dbReference>
<dbReference type="NCBIfam" id="TIGR01197">
    <property type="entry name" value="nramp"/>
    <property type="match status" value="1"/>
</dbReference>
<dbReference type="NCBIfam" id="NF037982">
    <property type="entry name" value="Nramp_1"/>
    <property type="match status" value="1"/>
</dbReference>
<dbReference type="NCBIfam" id="NF001923">
    <property type="entry name" value="PRK00701.1"/>
    <property type="match status" value="1"/>
</dbReference>
<dbReference type="PANTHER" id="PTHR11706:SF33">
    <property type="entry name" value="NATURAL RESISTANCE-ASSOCIATED MACROPHAGE PROTEIN 2"/>
    <property type="match status" value="1"/>
</dbReference>
<dbReference type="PANTHER" id="PTHR11706">
    <property type="entry name" value="SOLUTE CARRIER PROTEIN FAMILY 11 MEMBER"/>
    <property type="match status" value="1"/>
</dbReference>
<dbReference type="Pfam" id="PF01566">
    <property type="entry name" value="Nramp"/>
    <property type="match status" value="1"/>
</dbReference>
<dbReference type="PRINTS" id="PR00447">
    <property type="entry name" value="NATRESASSCMP"/>
</dbReference>
<accession>Q9PEL3</accession>
<reference key="1">
    <citation type="journal article" date="2000" name="Nature">
        <title>The genome sequence of the plant pathogen Xylella fastidiosa.</title>
        <authorList>
            <person name="Simpson A.J.G."/>
            <person name="Reinach F.C."/>
            <person name="Arruda P."/>
            <person name="Abreu F.A."/>
            <person name="Acencio M."/>
            <person name="Alvarenga R."/>
            <person name="Alves L.M.C."/>
            <person name="Araya J.E."/>
            <person name="Baia G.S."/>
            <person name="Baptista C.S."/>
            <person name="Barros M.H."/>
            <person name="Bonaccorsi E.D."/>
            <person name="Bordin S."/>
            <person name="Bove J.M."/>
            <person name="Briones M.R.S."/>
            <person name="Bueno M.R.P."/>
            <person name="Camargo A.A."/>
            <person name="Camargo L.E.A."/>
            <person name="Carraro D.M."/>
            <person name="Carrer H."/>
            <person name="Colauto N.B."/>
            <person name="Colombo C."/>
            <person name="Costa F.F."/>
            <person name="Costa M.C.R."/>
            <person name="Costa-Neto C.M."/>
            <person name="Coutinho L.L."/>
            <person name="Cristofani M."/>
            <person name="Dias-Neto E."/>
            <person name="Docena C."/>
            <person name="El-Dorry H."/>
            <person name="Facincani A.P."/>
            <person name="Ferreira A.J.S."/>
            <person name="Ferreira V.C.A."/>
            <person name="Ferro J.A."/>
            <person name="Fraga J.S."/>
            <person name="Franca S.C."/>
            <person name="Franco M.C."/>
            <person name="Frohme M."/>
            <person name="Furlan L.R."/>
            <person name="Garnier M."/>
            <person name="Goldman G.H."/>
            <person name="Goldman M.H.S."/>
            <person name="Gomes S.L."/>
            <person name="Gruber A."/>
            <person name="Ho P.L."/>
            <person name="Hoheisel J.D."/>
            <person name="Junqueira M.L."/>
            <person name="Kemper E.L."/>
            <person name="Kitajima J.P."/>
            <person name="Krieger J.E."/>
            <person name="Kuramae E.E."/>
            <person name="Laigret F."/>
            <person name="Lambais M.R."/>
            <person name="Leite L.C.C."/>
            <person name="Lemos E.G.M."/>
            <person name="Lemos M.V.F."/>
            <person name="Lopes S.A."/>
            <person name="Lopes C.R."/>
            <person name="Machado J.A."/>
            <person name="Machado M.A."/>
            <person name="Madeira A.M.B.N."/>
            <person name="Madeira H.M.F."/>
            <person name="Marino C.L."/>
            <person name="Marques M.V."/>
            <person name="Martins E.A.L."/>
            <person name="Martins E.M.F."/>
            <person name="Matsukuma A.Y."/>
            <person name="Menck C.F.M."/>
            <person name="Miracca E.C."/>
            <person name="Miyaki C.Y."/>
            <person name="Monteiro-Vitorello C.B."/>
            <person name="Moon D.H."/>
            <person name="Nagai M.A."/>
            <person name="Nascimento A.L.T.O."/>
            <person name="Netto L.E.S."/>
            <person name="Nhani A. Jr."/>
            <person name="Nobrega F.G."/>
            <person name="Nunes L.R."/>
            <person name="Oliveira M.A."/>
            <person name="de Oliveira M.C."/>
            <person name="de Oliveira R.C."/>
            <person name="Palmieri D.A."/>
            <person name="Paris A."/>
            <person name="Peixoto B.R."/>
            <person name="Pereira G.A.G."/>
            <person name="Pereira H.A. Jr."/>
            <person name="Pesquero J.B."/>
            <person name="Quaggio R.B."/>
            <person name="Roberto P.G."/>
            <person name="Rodrigues V."/>
            <person name="de Rosa A.J.M."/>
            <person name="de Rosa V.E. Jr."/>
            <person name="de Sa R.G."/>
            <person name="Santelli R.V."/>
            <person name="Sawasaki H.E."/>
            <person name="da Silva A.C.R."/>
            <person name="da Silva A.M."/>
            <person name="da Silva F.R."/>
            <person name="Silva W.A. Jr."/>
            <person name="da Silveira J.F."/>
            <person name="Silvestri M.L.Z."/>
            <person name="Siqueira W.J."/>
            <person name="de Souza A.A."/>
            <person name="de Souza A.P."/>
            <person name="Terenzi M.F."/>
            <person name="Truffi D."/>
            <person name="Tsai S.M."/>
            <person name="Tsuhako M.H."/>
            <person name="Vallada H."/>
            <person name="Van Sluys M.A."/>
            <person name="Verjovski-Almeida S."/>
            <person name="Vettore A.L."/>
            <person name="Zago M.A."/>
            <person name="Zatz M."/>
            <person name="Meidanis J."/>
            <person name="Setubal J.C."/>
        </authorList>
    </citation>
    <scope>NUCLEOTIDE SEQUENCE [LARGE SCALE GENOMIC DNA]</scope>
    <source>
        <strain>9a5c</strain>
    </source>
</reference>